<proteinExistence type="inferred from homology"/>
<comment type="catalytic activity">
    <reaction evidence="1">
        <text>tRNA(Cys) + L-cysteine + ATP = L-cysteinyl-tRNA(Cys) + AMP + diphosphate</text>
        <dbReference type="Rhea" id="RHEA:17773"/>
        <dbReference type="Rhea" id="RHEA-COMP:9661"/>
        <dbReference type="Rhea" id="RHEA-COMP:9679"/>
        <dbReference type="ChEBI" id="CHEBI:30616"/>
        <dbReference type="ChEBI" id="CHEBI:33019"/>
        <dbReference type="ChEBI" id="CHEBI:35235"/>
        <dbReference type="ChEBI" id="CHEBI:78442"/>
        <dbReference type="ChEBI" id="CHEBI:78517"/>
        <dbReference type="ChEBI" id="CHEBI:456215"/>
        <dbReference type="EC" id="6.1.1.16"/>
    </reaction>
</comment>
<comment type="cofactor">
    <cofactor evidence="1">
        <name>Zn(2+)</name>
        <dbReference type="ChEBI" id="CHEBI:29105"/>
    </cofactor>
    <text evidence="1">Binds 1 zinc ion per subunit.</text>
</comment>
<comment type="subunit">
    <text evidence="1">Monomer.</text>
</comment>
<comment type="subcellular location">
    <subcellularLocation>
        <location evidence="1">Cytoplasm</location>
    </subcellularLocation>
</comment>
<comment type="similarity">
    <text evidence="1">Belongs to the class-I aminoacyl-tRNA synthetase family.</text>
</comment>
<name>SYC_COLP3</name>
<protein>
    <recommendedName>
        <fullName evidence="1">Cysteine--tRNA ligase</fullName>
        <ecNumber evidence="1">6.1.1.16</ecNumber>
    </recommendedName>
    <alternativeName>
        <fullName evidence="1">Cysteinyl-tRNA synthetase</fullName>
        <shortName evidence="1">CysRS</shortName>
    </alternativeName>
</protein>
<gene>
    <name evidence="1" type="primary">cysS</name>
    <name type="ordered locus">CPS_3792</name>
</gene>
<dbReference type="EC" id="6.1.1.16" evidence="1"/>
<dbReference type="EMBL" id="CP000083">
    <property type="protein sequence ID" value="AAZ26452.1"/>
    <property type="molecule type" value="Genomic_DNA"/>
</dbReference>
<dbReference type="RefSeq" id="WP_011044541.1">
    <property type="nucleotide sequence ID" value="NC_003910.7"/>
</dbReference>
<dbReference type="SMR" id="Q47XL5"/>
<dbReference type="STRING" id="167879.CPS_3792"/>
<dbReference type="KEGG" id="cps:CPS_3792"/>
<dbReference type="eggNOG" id="COG0215">
    <property type="taxonomic scope" value="Bacteria"/>
</dbReference>
<dbReference type="HOGENOM" id="CLU_013528_0_1_6"/>
<dbReference type="Proteomes" id="UP000000547">
    <property type="component" value="Chromosome"/>
</dbReference>
<dbReference type="GO" id="GO:0005829">
    <property type="term" value="C:cytosol"/>
    <property type="evidence" value="ECO:0007669"/>
    <property type="project" value="TreeGrafter"/>
</dbReference>
<dbReference type="GO" id="GO:0005524">
    <property type="term" value="F:ATP binding"/>
    <property type="evidence" value="ECO:0007669"/>
    <property type="project" value="UniProtKB-UniRule"/>
</dbReference>
<dbReference type="GO" id="GO:0004817">
    <property type="term" value="F:cysteine-tRNA ligase activity"/>
    <property type="evidence" value="ECO:0007669"/>
    <property type="project" value="UniProtKB-UniRule"/>
</dbReference>
<dbReference type="GO" id="GO:0008270">
    <property type="term" value="F:zinc ion binding"/>
    <property type="evidence" value="ECO:0007669"/>
    <property type="project" value="UniProtKB-UniRule"/>
</dbReference>
<dbReference type="GO" id="GO:0006423">
    <property type="term" value="P:cysteinyl-tRNA aminoacylation"/>
    <property type="evidence" value="ECO:0007669"/>
    <property type="project" value="UniProtKB-UniRule"/>
</dbReference>
<dbReference type="CDD" id="cd07963">
    <property type="entry name" value="Anticodon_Ia_Cys"/>
    <property type="match status" value="1"/>
</dbReference>
<dbReference type="CDD" id="cd00672">
    <property type="entry name" value="CysRS_core"/>
    <property type="match status" value="1"/>
</dbReference>
<dbReference type="FunFam" id="3.40.50.620:FF:000009">
    <property type="entry name" value="Cysteine--tRNA ligase"/>
    <property type="match status" value="1"/>
</dbReference>
<dbReference type="Gene3D" id="1.20.120.1910">
    <property type="entry name" value="Cysteine-tRNA ligase, C-terminal anti-codon recognition domain"/>
    <property type="match status" value="1"/>
</dbReference>
<dbReference type="Gene3D" id="3.40.50.620">
    <property type="entry name" value="HUPs"/>
    <property type="match status" value="1"/>
</dbReference>
<dbReference type="HAMAP" id="MF_00041">
    <property type="entry name" value="Cys_tRNA_synth"/>
    <property type="match status" value="1"/>
</dbReference>
<dbReference type="InterPro" id="IPR015803">
    <property type="entry name" value="Cys-tRNA-ligase"/>
</dbReference>
<dbReference type="InterPro" id="IPR015273">
    <property type="entry name" value="Cys-tRNA-synt_Ia_DALR"/>
</dbReference>
<dbReference type="InterPro" id="IPR024909">
    <property type="entry name" value="Cys-tRNA/MSH_ligase"/>
</dbReference>
<dbReference type="InterPro" id="IPR056411">
    <property type="entry name" value="CysS_C"/>
</dbReference>
<dbReference type="InterPro" id="IPR014729">
    <property type="entry name" value="Rossmann-like_a/b/a_fold"/>
</dbReference>
<dbReference type="InterPro" id="IPR032678">
    <property type="entry name" value="tRNA-synt_1_cat_dom"/>
</dbReference>
<dbReference type="InterPro" id="IPR009080">
    <property type="entry name" value="tRNAsynth_Ia_anticodon-bd"/>
</dbReference>
<dbReference type="NCBIfam" id="TIGR00435">
    <property type="entry name" value="cysS"/>
    <property type="match status" value="1"/>
</dbReference>
<dbReference type="PANTHER" id="PTHR10890:SF3">
    <property type="entry name" value="CYSTEINE--TRNA LIGASE, CYTOPLASMIC"/>
    <property type="match status" value="1"/>
</dbReference>
<dbReference type="PANTHER" id="PTHR10890">
    <property type="entry name" value="CYSTEINYL-TRNA SYNTHETASE"/>
    <property type="match status" value="1"/>
</dbReference>
<dbReference type="Pfam" id="PF23493">
    <property type="entry name" value="CysS_C"/>
    <property type="match status" value="1"/>
</dbReference>
<dbReference type="Pfam" id="PF09190">
    <property type="entry name" value="DALR_2"/>
    <property type="match status" value="1"/>
</dbReference>
<dbReference type="Pfam" id="PF01406">
    <property type="entry name" value="tRNA-synt_1e"/>
    <property type="match status" value="1"/>
</dbReference>
<dbReference type="PRINTS" id="PR00983">
    <property type="entry name" value="TRNASYNTHCYS"/>
</dbReference>
<dbReference type="SMART" id="SM00840">
    <property type="entry name" value="DALR_2"/>
    <property type="match status" value="1"/>
</dbReference>
<dbReference type="SUPFAM" id="SSF47323">
    <property type="entry name" value="Anticodon-binding domain of a subclass of class I aminoacyl-tRNA synthetases"/>
    <property type="match status" value="1"/>
</dbReference>
<dbReference type="SUPFAM" id="SSF52374">
    <property type="entry name" value="Nucleotidylyl transferase"/>
    <property type="match status" value="1"/>
</dbReference>
<evidence type="ECO:0000255" key="1">
    <source>
        <dbReference type="HAMAP-Rule" id="MF_00041"/>
    </source>
</evidence>
<reference key="1">
    <citation type="journal article" date="2005" name="Proc. Natl. Acad. Sci. U.S.A.">
        <title>The psychrophilic lifestyle as revealed by the genome sequence of Colwellia psychrerythraea 34H through genomic and proteomic analyses.</title>
        <authorList>
            <person name="Methe B.A."/>
            <person name="Nelson K.E."/>
            <person name="Deming J.W."/>
            <person name="Momen B."/>
            <person name="Melamud E."/>
            <person name="Zhang X."/>
            <person name="Moult J."/>
            <person name="Madupu R."/>
            <person name="Nelson W.C."/>
            <person name="Dodson R.J."/>
            <person name="Brinkac L.M."/>
            <person name="Daugherty S.C."/>
            <person name="Durkin A.S."/>
            <person name="DeBoy R.T."/>
            <person name="Kolonay J.F."/>
            <person name="Sullivan S.A."/>
            <person name="Zhou L."/>
            <person name="Davidsen T.M."/>
            <person name="Wu M."/>
            <person name="Huston A.L."/>
            <person name="Lewis M."/>
            <person name="Weaver B."/>
            <person name="Weidman J.F."/>
            <person name="Khouri H."/>
            <person name="Utterback T.R."/>
            <person name="Feldblyum T.V."/>
            <person name="Fraser C.M."/>
        </authorList>
    </citation>
    <scope>NUCLEOTIDE SEQUENCE [LARGE SCALE GENOMIC DNA]</scope>
    <source>
        <strain>34H / ATCC BAA-681</strain>
    </source>
</reference>
<keyword id="KW-0030">Aminoacyl-tRNA synthetase</keyword>
<keyword id="KW-0067">ATP-binding</keyword>
<keyword id="KW-0963">Cytoplasm</keyword>
<keyword id="KW-0436">Ligase</keyword>
<keyword id="KW-0479">Metal-binding</keyword>
<keyword id="KW-0547">Nucleotide-binding</keyword>
<keyword id="KW-0648">Protein biosynthesis</keyword>
<keyword id="KW-0862">Zinc</keyword>
<organism>
    <name type="scientific">Colwellia psychrerythraea (strain 34H / ATCC BAA-681)</name>
    <name type="common">Vibrio psychroerythus</name>
    <dbReference type="NCBI Taxonomy" id="167879"/>
    <lineage>
        <taxon>Bacteria</taxon>
        <taxon>Pseudomonadati</taxon>
        <taxon>Pseudomonadota</taxon>
        <taxon>Gammaproteobacteria</taxon>
        <taxon>Alteromonadales</taxon>
        <taxon>Colwelliaceae</taxon>
        <taxon>Colwellia</taxon>
    </lineage>
</organism>
<sequence length="469" mass="52455">MLQIYNTLSRQKETFTPINAGKVGLYVCGCTVYDLCHIGHGRTYISFDNIARYLRFSGYDVNYVRNITDVEDKIINRANENNETTEALTERTIAAMHQDFDSLNMARPDLEPRVTTHMNEIIAMIETLVTKEHAYVAGANAASTGQGDVLFDVSSYNDYGKLSGQNLEQLQSGSRVEVDQNKNNPLDFVLWKSAKPGEPSWSSPWGEGRPGWHIECSAMNAKELGHHFDIHGGGSDLTFPHHENEIAQSCCALNTPYVNYWMHTGMVQVDQEKMSKSLGNFFTIRDVLAQYDAETVRFFLTTGHYRSQLNYSTDNLTQARASVERIYTSLRDVNIESDYVINKDSSFVKQFCQAMDDDFNTPQALAVLFEISKELNVAKAAANNALAIDLASTLVALGEIVGLLQLDPAAFLQGDNDNDEVAIIEALIVQRNQARIDKDWAMADDARDKLNAMNIVLEDSAGKTTWRKA</sequence>
<feature type="chain" id="PRO_0000240904" description="Cysteine--tRNA ligase">
    <location>
        <begin position="1"/>
        <end position="469"/>
    </location>
</feature>
<feature type="short sequence motif" description="'HIGH' region">
    <location>
        <begin position="30"/>
        <end position="40"/>
    </location>
</feature>
<feature type="short sequence motif" description="'KMSKS' region">
    <location>
        <begin position="273"/>
        <end position="277"/>
    </location>
</feature>
<feature type="binding site" evidence="1">
    <location>
        <position position="28"/>
    </location>
    <ligand>
        <name>Zn(2+)</name>
        <dbReference type="ChEBI" id="CHEBI:29105"/>
    </ligand>
</feature>
<feature type="binding site" evidence="1">
    <location>
        <position position="216"/>
    </location>
    <ligand>
        <name>Zn(2+)</name>
        <dbReference type="ChEBI" id="CHEBI:29105"/>
    </ligand>
</feature>
<feature type="binding site" evidence="1">
    <location>
        <position position="241"/>
    </location>
    <ligand>
        <name>Zn(2+)</name>
        <dbReference type="ChEBI" id="CHEBI:29105"/>
    </ligand>
</feature>
<feature type="binding site" evidence="1">
    <location>
        <position position="245"/>
    </location>
    <ligand>
        <name>Zn(2+)</name>
        <dbReference type="ChEBI" id="CHEBI:29105"/>
    </ligand>
</feature>
<feature type="binding site" evidence="1">
    <location>
        <position position="276"/>
    </location>
    <ligand>
        <name>ATP</name>
        <dbReference type="ChEBI" id="CHEBI:30616"/>
    </ligand>
</feature>
<accession>Q47XL5</accession>